<proteinExistence type="evidence at protein level"/>
<evidence type="ECO:0000250" key="1"/>
<evidence type="ECO:0000305" key="2"/>
<organism>
    <name type="scientific">Mus musculus</name>
    <name type="common">Mouse</name>
    <dbReference type="NCBI Taxonomy" id="10090"/>
    <lineage>
        <taxon>Eukaryota</taxon>
        <taxon>Metazoa</taxon>
        <taxon>Chordata</taxon>
        <taxon>Craniata</taxon>
        <taxon>Vertebrata</taxon>
        <taxon>Euteleostomi</taxon>
        <taxon>Mammalia</taxon>
        <taxon>Eutheria</taxon>
        <taxon>Euarchontoglires</taxon>
        <taxon>Glires</taxon>
        <taxon>Rodentia</taxon>
        <taxon>Myomorpha</taxon>
        <taxon>Muroidea</taxon>
        <taxon>Muridae</taxon>
        <taxon>Murinae</taxon>
        <taxon>Mus</taxon>
        <taxon>Mus</taxon>
    </lineage>
</organism>
<protein>
    <recommendedName>
        <fullName>ADP-ribosylation factor-like protein 15</fullName>
    </recommendedName>
    <alternativeName>
        <fullName>ADP-ribosylation factor-related protein 2</fullName>
        <shortName>ARF-related protein 2</shortName>
    </alternativeName>
</protein>
<comment type="similarity">
    <text evidence="2">Belongs to the small GTPase superfamily. Arf family.</text>
</comment>
<feature type="chain" id="PRO_0000282388" description="ADP-ribosylation factor-like protein 15">
    <location>
        <begin position="1"/>
        <end position="204"/>
    </location>
</feature>
<feature type="binding site" evidence="1">
    <location>
        <begin position="39"/>
        <end position="46"/>
    </location>
    <ligand>
        <name>GTP</name>
        <dbReference type="ChEBI" id="CHEBI:37565"/>
    </ligand>
</feature>
<feature type="binding site" evidence="1">
    <location>
        <begin position="82"/>
        <end position="86"/>
    </location>
    <ligand>
        <name>GTP</name>
        <dbReference type="ChEBI" id="CHEBI:37565"/>
    </ligand>
</feature>
<feature type="binding site" evidence="1">
    <location>
        <begin position="142"/>
        <end position="145"/>
    </location>
    <ligand>
        <name>GTP</name>
        <dbReference type="ChEBI" id="CHEBI:37565"/>
    </ligand>
</feature>
<keyword id="KW-0342">GTP-binding</keyword>
<keyword id="KW-0547">Nucleotide-binding</keyword>
<keyword id="KW-1185">Reference proteome</keyword>
<sequence>MSDLRITEAFLYMDYLCFRALCCKGPPPARPEYDLVCIGLTGSGKTSLLSELCSESPENVVSTTGFSIKAVPFQNAVLNVKELGGADNIRKYWSRYYQGSQGVIFVLDSASSEDDLETARNELHSALQHPQLCTLPFLILANHQDKPAARSVQEIKKYFELEPLARGKRWILQPCSLDDVDTLKDSFSQLINLLEEKDHEAVRM</sequence>
<reference key="1">
    <citation type="journal article" date="2005" name="Science">
        <title>The transcriptional landscape of the mammalian genome.</title>
        <authorList>
            <person name="Carninci P."/>
            <person name="Kasukawa T."/>
            <person name="Katayama S."/>
            <person name="Gough J."/>
            <person name="Frith M.C."/>
            <person name="Maeda N."/>
            <person name="Oyama R."/>
            <person name="Ravasi T."/>
            <person name="Lenhard B."/>
            <person name="Wells C."/>
            <person name="Kodzius R."/>
            <person name="Shimokawa K."/>
            <person name="Bajic V.B."/>
            <person name="Brenner S.E."/>
            <person name="Batalov S."/>
            <person name="Forrest A.R."/>
            <person name="Zavolan M."/>
            <person name="Davis M.J."/>
            <person name="Wilming L.G."/>
            <person name="Aidinis V."/>
            <person name="Allen J.E."/>
            <person name="Ambesi-Impiombato A."/>
            <person name="Apweiler R."/>
            <person name="Aturaliya R.N."/>
            <person name="Bailey T.L."/>
            <person name="Bansal M."/>
            <person name="Baxter L."/>
            <person name="Beisel K.W."/>
            <person name="Bersano T."/>
            <person name="Bono H."/>
            <person name="Chalk A.M."/>
            <person name="Chiu K.P."/>
            <person name="Choudhary V."/>
            <person name="Christoffels A."/>
            <person name="Clutterbuck D.R."/>
            <person name="Crowe M.L."/>
            <person name="Dalla E."/>
            <person name="Dalrymple B.P."/>
            <person name="de Bono B."/>
            <person name="Della Gatta G."/>
            <person name="di Bernardo D."/>
            <person name="Down T."/>
            <person name="Engstrom P."/>
            <person name="Fagiolini M."/>
            <person name="Faulkner G."/>
            <person name="Fletcher C.F."/>
            <person name="Fukushima T."/>
            <person name="Furuno M."/>
            <person name="Futaki S."/>
            <person name="Gariboldi M."/>
            <person name="Georgii-Hemming P."/>
            <person name="Gingeras T.R."/>
            <person name="Gojobori T."/>
            <person name="Green R.E."/>
            <person name="Gustincich S."/>
            <person name="Harbers M."/>
            <person name="Hayashi Y."/>
            <person name="Hensch T.K."/>
            <person name="Hirokawa N."/>
            <person name="Hill D."/>
            <person name="Huminiecki L."/>
            <person name="Iacono M."/>
            <person name="Ikeo K."/>
            <person name="Iwama A."/>
            <person name="Ishikawa T."/>
            <person name="Jakt M."/>
            <person name="Kanapin A."/>
            <person name="Katoh M."/>
            <person name="Kawasawa Y."/>
            <person name="Kelso J."/>
            <person name="Kitamura H."/>
            <person name="Kitano H."/>
            <person name="Kollias G."/>
            <person name="Krishnan S.P."/>
            <person name="Kruger A."/>
            <person name="Kummerfeld S.K."/>
            <person name="Kurochkin I.V."/>
            <person name="Lareau L.F."/>
            <person name="Lazarevic D."/>
            <person name="Lipovich L."/>
            <person name="Liu J."/>
            <person name="Liuni S."/>
            <person name="McWilliam S."/>
            <person name="Madan Babu M."/>
            <person name="Madera M."/>
            <person name="Marchionni L."/>
            <person name="Matsuda H."/>
            <person name="Matsuzawa S."/>
            <person name="Miki H."/>
            <person name="Mignone F."/>
            <person name="Miyake S."/>
            <person name="Morris K."/>
            <person name="Mottagui-Tabar S."/>
            <person name="Mulder N."/>
            <person name="Nakano N."/>
            <person name="Nakauchi H."/>
            <person name="Ng P."/>
            <person name="Nilsson R."/>
            <person name="Nishiguchi S."/>
            <person name="Nishikawa S."/>
            <person name="Nori F."/>
            <person name="Ohara O."/>
            <person name="Okazaki Y."/>
            <person name="Orlando V."/>
            <person name="Pang K.C."/>
            <person name="Pavan W.J."/>
            <person name="Pavesi G."/>
            <person name="Pesole G."/>
            <person name="Petrovsky N."/>
            <person name="Piazza S."/>
            <person name="Reed J."/>
            <person name="Reid J.F."/>
            <person name="Ring B.Z."/>
            <person name="Ringwald M."/>
            <person name="Rost B."/>
            <person name="Ruan Y."/>
            <person name="Salzberg S.L."/>
            <person name="Sandelin A."/>
            <person name="Schneider C."/>
            <person name="Schoenbach C."/>
            <person name="Sekiguchi K."/>
            <person name="Semple C.A."/>
            <person name="Seno S."/>
            <person name="Sessa L."/>
            <person name="Sheng Y."/>
            <person name="Shibata Y."/>
            <person name="Shimada H."/>
            <person name="Shimada K."/>
            <person name="Silva D."/>
            <person name="Sinclair B."/>
            <person name="Sperling S."/>
            <person name="Stupka E."/>
            <person name="Sugiura K."/>
            <person name="Sultana R."/>
            <person name="Takenaka Y."/>
            <person name="Taki K."/>
            <person name="Tammoja K."/>
            <person name="Tan S.L."/>
            <person name="Tang S."/>
            <person name="Taylor M.S."/>
            <person name="Tegner J."/>
            <person name="Teichmann S.A."/>
            <person name="Ueda H.R."/>
            <person name="van Nimwegen E."/>
            <person name="Verardo R."/>
            <person name="Wei C.L."/>
            <person name="Yagi K."/>
            <person name="Yamanishi H."/>
            <person name="Zabarovsky E."/>
            <person name="Zhu S."/>
            <person name="Zimmer A."/>
            <person name="Hide W."/>
            <person name="Bult C."/>
            <person name="Grimmond S.M."/>
            <person name="Teasdale R.D."/>
            <person name="Liu E.T."/>
            <person name="Brusic V."/>
            <person name="Quackenbush J."/>
            <person name="Wahlestedt C."/>
            <person name="Mattick J.S."/>
            <person name="Hume D.A."/>
            <person name="Kai C."/>
            <person name="Sasaki D."/>
            <person name="Tomaru Y."/>
            <person name="Fukuda S."/>
            <person name="Kanamori-Katayama M."/>
            <person name="Suzuki M."/>
            <person name="Aoki J."/>
            <person name="Arakawa T."/>
            <person name="Iida J."/>
            <person name="Imamura K."/>
            <person name="Itoh M."/>
            <person name="Kato T."/>
            <person name="Kawaji H."/>
            <person name="Kawagashira N."/>
            <person name="Kawashima T."/>
            <person name="Kojima M."/>
            <person name="Kondo S."/>
            <person name="Konno H."/>
            <person name="Nakano K."/>
            <person name="Ninomiya N."/>
            <person name="Nishio T."/>
            <person name="Okada M."/>
            <person name="Plessy C."/>
            <person name="Shibata K."/>
            <person name="Shiraki T."/>
            <person name="Suzuki S."/>
            <person name="Tagami M."/>
            <person name="Waki K."/>
            <person name="Watahiki A."/>
            <person name="Okamura-Oho Y."/>
            <person name="Suzuki H."/>
            <person name="Kawai J."/>
            <person name="Hayashizaki Y."/>
        </authorList>
    </citation>
    <scope>NUCLEOTIDE SEQUENCE [LARGE SCALE MRNA]</scope>
    <source>
        <strain>C57BL/6J</strain>
        <tissue>Cerebellum</tissue>
        <tissue>Embryo</tissue>
        <tissue>Heart</tissue>
        <tissue>Thymus</tissue>
    </source>
</reference>
<reference key="2">
    <citation type="journal article" date="2004" name="Genome Res.">
        <title>The status, quality, and expansion of the NIH full-length cDNA project: the Mammalian Gene Collection (MGC).</title>
        <authorList>
            <consortium name="The MGC Project Team"/>
        </authorList>
    </citation>
    <scope>NUCLEOTIDE SEQUENCE [LARGE SCALE MRNA]</scope>
    <source>
        <tissue>Brain</tissue>
    </source>
</reference>
<reference key="3">
    <citation type="journal article" date="2010" name="Cell">
        <title>A tissue-specific atlas of mouse protein phosphorylation and expression.</title>
        <authorList>
            <person name="Huttlin E.L."/>
            <person name="Jedrychowski M.P."/>
            <person name="Elias J.E."/>
            <person name="Goswami T."/>
            <person name="Rad R."/>
            <person name="Beausoleil S.A."/>
            <person name="Villen J."/>
            <person name="Haas W."/>
            <person name="Sowa M.E."/>
            <person name="Gygi S.P."/>
        </authorList>
    </citation>
    <scope>IDENTIFICATION BY MASS SPECTROMETRY [LARGE SCALE ANALYSIS]</scope>
    <source>
        <tissue>Brain</tissue>
        <tissue>Brown adipose tissue</tissue>
        <tissue>Lung</tissue>
        <tissue>Pancreas</tissue>
    </source>
</reference>
<name>ARL15_MOUSE</name>
<dbReference type="EMBL" id="AK039965">
    <property type="protein sequence ID" value="BAC30485.1"/>
    <property type="molecule type" value="mRNA"/>
</dbReference>
<dbReference type="EMBL" id="AK048736">
    <property type="protein sequence ID" value="BAC33440.1"/>
    <property type="molecule type" value="mRNA"/>
</dbReference>
<dbReference type="EMBL" id="AK050979">
    <property type="protein sequence ID" value="BAE20688.1"/>
    <property type="molecule type" value="mRNA"/>
</dbReference>
<dbReference type="EMBL" id="AK052164">
    <property type="protein sequence ID" value="BAC34864.1"/>
    <property type="molecule type" value="mRNA"/>
</dbReference>
<dbReference type="EMBL" id="BC120664">
    <property type="protein sequence ID" value="AAI20665.1"/>
    <property type="molecule type" value="mRNA"/>
</dbReference>
<dbReference type="EMBL" id="BC120666">
    <property type="protein sequence ID" value="AAI20667.1"/>
    <property type="molecule type" value="mRNA"/>
</dbReference>
<dbReference type="CCDS" id="CCDS36785.1"/>
<dbReference type="RefSeq" id="NP_766183.1">
    <property type="nucleotide sequence ID" value="NM_172595.5"/>
</dbReference>
<dbReference type="SMR" id="Q8BGR6"/>
<dbReference type="BioGRID" id="230053">
    <property type="interactions" value="5"/>
</dbReference>
<dbReference type="FunCoup" id="Q8BGR6">
    <property type="interactions" value="384"/>
</dbReference>
<dbReference type="STRING" id="10090.ENSMUSP00000088740"/>
<dbReference type="iPTMnet" id="Q8BGR6"/>
<dbReference type="PhosphoSitePlus" id="Q8BGR6"/>
<dbReference type="SwissPalm" id="Q8BGR6"/>
<dbReference type="PaxDb" id="10090-ENSMUSP00000088740"/>
<dbReference type="ProteomicsDB" id="274969"/>
<dbReference type="Pumba" id="Q8BGR6"/>
<dbReference type="Antibodypedia" id="51587">
    <property type="antibodies" value="125 antibodies from 30 providers"/>
</dbReference>
<dbReference type="DNASU" id="218639"/>
<dbReference type="Ensembl" id="ENSMUST00000091201.7">
    <property type="protein sequence ID" value="ENSMUSP00000088740.7"/>
    <property type="gene ID" value="ENSMUSG00000042348.11"/>
</dbReference>
<dbReference type="GeneID" id="218639"/>
<dbReference type="KEGG" id="mmu:218639"/>
<dbReference type="UCSC" id="uc007rxj.1">
    <property type="organism name" value="mouse"/>
</dbReference>
<dbReference type="AGR" id="MGI:2442308"/>
<dbReference type="CTD" id="54622"/>
<dbReference type="MGI" id="MGI:2442308">
    <property type="gene designation" value="Arl15"/>
</dbReference>
<dbReference type="VEuPathDB" id="HostDB:ENSMUSG00000042348"/>
<dbReference type="eggNOG" id="KOG0071">
    <property type="taxonomic scope" value="Eukaryota"/>
</dbReference>
<dbReference type="GeneTree" id="ENSGT00940000156244"/>
<dbReference type="HOGENOM" id="CLU_040729_13_0_1"/>
<dbReference type="InParanoid" id="Q8BGR6"/>
<dbReference type="OMA" id="RLCCKGP"/>
<dbReference type="OrthoDB" id="414781at2759"/>
<dbReference type="PhylomeDB" id="Q8BGR6"/>
<dbReference type="TreeFam" id="TF329693"/>
<dbReference type="BioGRID-ORCS" id="218639">
    <property type="hits" value="2 hits in 77 CRISPR screens"/>
</dbReference>
<dbReference type="ChiTaRS" id="Arl15">
    <property type="organism name" value="mouse"/>
</dbReference>
<dbReference type="PRO" id="PR:Q8BGR6"/>
<dbReference type="Proteomes" id="UP000000589">
    <property type="component" value="Chromosome 13"/>
</dbReference>
<dbReference type="RNAct" id="Q8BGR6">
    <property type="molecule type" value="protein"/>
</dbReference>
<dbReference type="Bgee" id="ENSMUSG00000042348">
    <property type="expression patterns" value="Expressed in manus and 222 other cell types or tissues"/>
</dbReference>
<dbReference type="ExpressionAtlas" id="Q8BGR6">
    <property type="expression patterns" value="baseline and differential"/>
</dbReference>
<dbReference type="GO" id="GO:0005525">
    <property type="term" value="F:GTP binding"/>
    <property type="evidence" value="ECO:0007669"/>
    <property type="project" value="UniProtKB-KW"/>
</dbReference>
<dbReference type="GO" id="GO:0003924">
    <property type="term" value="F:GTPase activity"/>
    <property type="evidence" value="ECO:0007669"/>
    <property type="project" value="InterPro"/>
</dbReference>
<dbReference type="FunFam" id="3.40.50.300:FF:000934">
    <property type="entry name" value="ADP-ribosylation factor-like 15 isoform X1"/>
    <property type="match status" value="1"/>
</dbReference>
<dbReference type="Gene3D" id="3.40.50.300">
    <property type="entry name" value="P-loop containing nucleotide triphosphate hydrolases"/>
    <property type="match status" value="1"/>
</dbReference>
<dbReference type="InterPro" id="IPR042292">
    <property type="entry name" value="ARL15"/>
</dbReference>
<dbReference type="InterPro" id="IPR027417">
    <property type="entry name" value="P-loop_NTPase"/>
</dbReference>
<dbReference type="InterPro" id="IPR006689">
    <property type="entry name" value="Small_GTPase_ARF/SAR"/>
</dbReference>
<dbReference type="PANTHER" id="PTHR46693">
    <property type="entry name" value="ADP-RIBOSYLATION FACTOR-LIKE PROTEIN 15"/>
    <property type="match status" value="1"/>
</dbReference>
<dbReference type="PANTHER" id="PTHR46693:SF1">
    <property type="entry name" value="ADP-RIBOSYLATION FACTOR-LIKE PROTEIN 15"/>
    <property type="match status" value="1"/>
</dbReference>
<dbReference type="Pfam" id="PF00025">
    <property type="entry name" value="Arf"/>
    <property type="match status" value="1"/>
</dbReference>
<dbReference type="PRINTS" id="PR00328">
    <property type="entry name" value="SAR1GTPBP"/>
</dbReference>
<dbReference type="SMART" id="SM00177">
    <property type="entry name" value="ARF"/>
    <property type="match status" value="1"/>
</dbReference>
<dbReference type="SMART" id="SM00178">
    <property type="entry name" value="SAR"/>
    <property type="match status" value="1"/>
</dbReference>
<dbReference type="SUPFAM" id="SSF52540">
    <property type="entry name" value="P-loop containing nucleoside triphosphate hydrolases"/>
    <property type="match status" value="1"/>
</dbReference>
<dbReference type="PROSITE" id="PS51417">
    <property type="entry name" value="ARF"/>
    <property type="match status" value="1"/>
</dbReference>
<accession>Q8BGR6</accession>
<gene>
    <name type="primary">Arl15</name>
    <name type="synonym">Arfrp2</name>
</gene>